<gene>
    <name evidence="1" type="primary">rpsJ</name>
    <name type="ordered locus">AB57_3531</name>
</gene>
<proteinExistence type="evidence at protein level"/>
<sequence length="103" mass="11701">MSNQRIRIRLKSFDHRLIDQSAQEIVETAKRTGAQVCGPIPMPTRIERFNVLTSPHVNKDARDQYEIRTYKRLIDIVQPTDKTVDALMKLDLAAGVDVQIALG</sequence>
<dbReference type="EMBL" id="CP001182">
    <property type="protein sequence ID" value="ACJ42898.1"/>
    <property type="molecule type" value="Genomic_DNA"/>
</dbReference>
<dbReference type="RefSeq" id="WP_000070912.1">
    <property type="nucleotide sequence ID" value="NC_011586.2"/>
</dbReference>
<dbReference type="PDB" id="7M4U">
    <property type="method" value="EM"/>
    <property type="resolution" value="2.71 A"/>
    <property type="chains" value="j=1-103"/>
</dbReference>
<dbReference type="PDBsum" id="7M4U"/>
<dbReference type="SMR" id="B7IA40"/>
<dbReference type="IntAct" id="B7IA40">
    <property type="interactions" value="1"/>
</dbReference>
<dbReference type="GeneID" id="97425198"/>
<dbReference type="KEGG" id="abn:AB57_3531"/>
<dbReference type="HOGENOM" id="CLU_122625_1_3_6"/>
<dbReference type="Proteomes" id="UP000007094">
    <property type="component" value="Chromosome"/>
</dbReference>
<dbReference type="GO" id="GO:1990904">
    <property type="term" value="C:ribonucleoprotein complex"/>
    <property type="evidence" value="ECO:0007669"/>
    <property type="project" value="UniProtKB-KW"/>
</dbReference>
<dbReference type="GO" id="GO:0005840">
    <property type="term" value="C:ribosome"/>
    <property type="evidence" value="ECO:0007669"/>
    <property type="project" value="UniProtKB-KW"/>
</dbReference>
<dbReference type="GO" id="GO:0003735">
    <property type="term" value="F:structural constituent of ribosome"/>
    <property type="evidence" value="ECO:0007669"/>
    <property type="project" value="InterPro"/>
</dbReference>
<dbReference type="GO" id="GO:0000049">
    <property type="term" value="F:tRNA binding"/>
    <property type="evidence" value="ECO:0007669"/>
    <property type="project" value="UniProtKB-UniRule"/>
</dbReference>
<dbReference type="GO" id="GO:0006412">
    <property type="term" value="P:translation"/>
    <property type="evidence" value="ECO:0007669"/>
    <property type="project" value="UniProtKB-UniRule"/>
</dbReference>
<dbReference type="FunFam" id="3.30.70.600:FF:000001">
    <property type="entry name" value="30S ribosomal protein S10"/>
    <property type="match status" value="1"/>
</dbReference>
<dbReference type="Gene3D" id="3.30.70.600">
    <property type="entry name" value="Ribosomal protein S10 domain"/>
    <property type="match status" value="1"/>
</dbReference>
<dbReference type="HAMAP" id="MF_00508">
    <property type="entry name" value="Ribosomal_uS10"/>
    <property type="match status" value="1"/>
</dbReference>
<dbReference type="InterPro" id="IPR001848">
    <property type="entry name" value="Ribosomal_uS10"/>
</dbReference>
<dbReference type="InterPro" id="IPR018268">
    <property type="entry name" value="Ribosomal_uS10_CS"/>
</dbReference>
<dbReference type="InterPro" id="IPR027486">
    <property type="entry name" value="Ribosomal_uS10_dom"/>
</dbReference>
<dbReference type="InterPro" id="IPR036838">
    <property type="entry name" value="Ribosomal_uS10_dom_sf"/>
</dbReference>
<dbReference type="NCBIfam" id="NF001861">
    <property type="entry name" value="PRK00596.1"/>
    <property type="match status" value="1"/>
</dbReference>
<dbReference type="NCBIfam" id="TIGR01049">
    <property type="entry name" value="rpsJ_bact"/>
    <property type="match status" value="1"/>
</dbReference>
<dbReference type="PANTHER" id="PTHR11700">
    <property type="entry name" value="30S RIBOSOMAL PROTEIN S10 FAMILY MEMBER"/>
    <property type="match status" value="1"/>
</dbReference>
<dbReference type="Pfam" id="PF00338">
    <property type="entry name" value="Ribosomal_S10"/>
    <property type="match status" value="1"/>
</dbReference>
<dbReference type="PRINTS" id="PR00971">
    <property type="entry name" value="RIBOSOMALS10"/>
</dbReference>
<dbReference type="SMART" id="SM01403">
    <property type="entry name" value="Ribosomal_S10"/>
    <property type="match status" value="1"/>
</dbReference>
<dbReference type="SUPFAM" id="SSF54999">
    <property type="entry name" value="Ribosomal protein S10"/>
    <property type="match status" value="1"/>
</dbReference>
<dbReference type="PROSITE" id="PS00361">
    <property type="entry name" value="RIBOSOMAL_S10"/>
    <property type="match status" value="1"/>
</dbReference>
<organism>
    <name type="scientific">Acinetobacter baumannii (strain AB0057)</name>
    <dbReference type="NCBI Taxonomy" id="480119"/>
    <lineage>
        <taxon>Bacteria</taxon>
        <taxon>Pseudomonadati</taxon>
        <taxon>Pseudomonadota</taxon>
        <taxon>Gammaproteobacteria</taxon>
        <taxon>Moraxellales</taxon>
        <taxon>Moraxellaceae</taxon>
        <taxon>Acinetobacter</taxon>
        <taxon>Acinetobacter calcoaceticus/baumannii complex</taxon>
    </lineage>
</organism>
<accession>B7IA40</accession>
<keyword id="KW-0002">3D-structure</keyword>
<keyword id="KW-0687">Ribonucleoprotein</keyword>
<keyword id="KW-0689">Ribosomal protein</keyword>
<reference key="1">
    <citation type="journal article" date="2008" name="J. Bacteriol.">
        <title>Comparative genome sequence analysis of multidrug-resistant Acinetobacter baumannii.</title>
        <authorList>
            <person name="Adams M.D."/>
            <person name="Goglin K."/>
            <person name="Molyneaux N."/>
            <person name="Hujer K.M."/>
            <person name="Lavender H."/>
            <person name="Jamison J.J."/>
            <person name="MacDonald I.J."/>
            <person name="Martin K.M."/>
            <person name="Russo T."/>
            <person name="Campagnari A.A."/>
            <person name="Hujer A.M."/>
            <person name="Bonomo R.A."/>
            <person name="Gill S.R."/>
        </authorList>
    </citation>
    <scope>NUCLEOTIDE SEQUENCE [LARGE SCALE GENOMIC DNA]</scope>
    <source>
        <strain>AB0057</strain>
    </source>
</reference>
<feature type="chain" id="PRO_1000127066" description="Small ribosomal subunit protein uS10">
    <location>
        <begin position="1"/>
        <end position="103"/>
    </location>
</feature>
<feature type="strand" evidence="3">
    <location>
        <begin position="5"/>
        <end position="13"/>
    </location>
</feature>
<feature type="helix" evidence="3">
    <location>
        <begin position="15"/>
        <end position="32"/>
    </location>
</feature>
<feature type="strand" evidence="3">
    <location>
        <begin position="35"/>
        <end position="41"/>
    </location>
</feature>
<feature type="strand" evidence="3">
    <location>
        <begin position="45"/>
        <end position="52"/>
    </location>
</feature>
<feature type="strand" evidence="3">
    <location>
        <begin position="54"/>
        <end position="56"/>
    </location>
</feature>
<feature type="strand" evidence="3">
    <location>
        <begin position="62"/>
        <end position="78"/>
    </location>
</feature>
<feature type="helix" evidence="3">
    <location>
        <begin position="81"/>
        <end position="88"/>
    </location>
</feature>
<feature type="strand" evidence="3">
    <location>
        <begin position="96"/>
        <end position="101"/>
    </location>
</feature>
<comment type="function">
    <text evidence="1">Involved in the binding of tRNA to the ribosomes.</text>
</comment>
<comment type="subunit">
    <text evidence="1">Part of the 30S ribosomal subunit.</text>
</comment>
<comment type="similarity">
    <text evidence="1">Belongs to the universal ribosomal protein uS10 family.</text>
</comment>
<name>RS10_ACIB5</name>
<evidence type="ECO:0000255" key="1">
    <source>
        <dbReference type="HAMAP-Rule" id="MF_00508"/>
    </source>
</evidence>
<evidence type="ECO:0000305" key="2"/>
<evidence type="ECO:0007829" key="3">
    <source>
        <dbReference type="PDB" id="7M4U"/>
    </source>
</evidence>
<protein>
    <recommendedName>
        <fullName evidence="1">Small ribosomal subunit protein uS10</fullName>
    </recommendedName>
    <alternativeName>
        <fullName evidence="2">30S ribosomal protein S10</fullName>
    </alternativeName>
</protein>